<name>NOP10_METM5</name>
<feature type="chain" id="PRO_1000047025" description="Ribosome biogenesis protein Nop10">
    <location>
        <begin position="1"/>
        <end position="51"/>
    </location>
</feature>
<proteinExistence type="inferred from homology"/>
<comment type="function">
    <text evidence="1">Involved in ribosome biogenesis; more specifically in 18S rRNA pseudouridylation and in cleavage of pre-rRNA.</text>
</comment>
<comment type="similarity">
    <text evidence="1">Belongs to the NOP10 family.</text>
</comment>
<reference key="1">
    <citation type="submission" date="2007-03" db="EMBL/GenBank/DDBJ databases">
        <title>Complete sequence of chromosome of Methanococcus maripaludis C5.</title>
        <authorList>
            <consortium name="US DOE Joint Genome Institute"/>
            <person name="Copeland A."/>
            <person name="Lucas S."/>
            <person name="Lapidus A."/>
            <person name="Barry K."/>
            <person name="Glavina del Rio T."/>
            <person name="Dalin E."/>
            <person name="Tice H."/>
            <person name="Pitluck S."/>
            <person name="Chertkov O."/>
            <person name="Brettin T."/>
            <person name="Bruce D."/>
            <person name="Han C."/>
            <person name="Detter J.C."/>
            <person name="Schmutz J."/>
            <person name="Larimer F."/>
            <person name="Land M."/>
            <person name="Hauser L."/>
            <person name="Kyrpides N."/>
            <person name="Mikhailova N."/>
            <person name="Sieprawska-Lupa M."/>
            <person name="Whitman W.B."/>
            <person name="Richardson P."/>
        </authorList>
    </citation>
    <scope>NUCLEOTIDE SEQUENCE [LARGE SCALE GENOMIC DNA]</scope>
    <source>
        <strain>C5 / ATCC BAA-1333</strain>
    </source>
</reference>
<protein>
    <recommendedName>
        <fullName evidence="1">Ribosome biogenesis protein Nop10</fullName>
    </recommendedName>
</protein>
<organism>
    <name type="scientific">Methanococcus maripaludis (strain C5 / ATCC BAA-1333)</name>
    <dbReference type="NCBI Taxonomy" id="402880"/>
    <lineage>
        <taxon>Archaea</taxon>
        <taxon>Methanobacteriati</taxon>
        <taxon>Methanobacteriota</taxon>
        <taxon>Methanomada group</taxon>
        <taxon>Methanococci</taxon>
        <taxon>Methanococcales</taxon>
        <taxon>Methanococcaceae</taxon>
        <taxon>Methanococcus</taxon>
    </lineage>
</organism>
<keyword id="KW-0687">Ribonucleoprotein</keyword>
<keyword id="KW-0690">Ribosome biogenesis</keyword>
<keyword id="KW-0698">rRNA processing</keyword>
<dbReference type="EMBL" id="CP000609">
    <property type="protein sequence ID" value="ABO35997.1"/>
    <property type="molecule type" value="Genomic_DNA"/>
</dbReference>
<dbReference type="RefSeq" id="WP_011869444.1">
    <property type="nucleotide sequence ID" value="NC_009135.1"/>
</dbReference>
<dbReference type="SMR" id="A4G0L3"/>
<dbReference type="STRING" id="402880.MmarC5_1700"/>
<dbReference type="GeneID" id="4928054"/>
<dbReference type="KEGG" id="mmq:MmarC5_1700"/>
<dbReference type="eggNOG" id="arCOG00906">
    <property type="taxonomic scope" value="Archaea"/>
</dbReference>
<dbReference type="HOGENOM" id="CLU_196480_1_0_2"/>
<dbReference type="OrthoDB" id="7259at2157"/>
<dbReference type="Proteomes" id="UP000000253">
    <property type="component" value="Chromosome"/>
</dbReference>
<dbReference type="GO" id="GO:1990904">
    <property type="term" value="C:ribonucleoprotein complex"/>
    <property type="evidence" value="ECO:0007669"/>
    <property type="project" value="UniProtKB-KW"/>
</dbReference>
<dbReference type="GO" id="GO:0030515">
    <property type="term" value="F:snoRNA binding"/>
    <property type="evidence" value="ECO:0007669"/>
    <property type="project" value="InterPro"/>
</dbReference>
<dbReference type="GO" id="GO:0001522">
    <property type="term" value="P:pseudouridine synthesis"/>
    <property type="evidence" value="ECO:0007669"/>
    <property type="project" value="InterPro"/>
</dbReference>
<dbReference type="GO" id="GO:0006364">
    <property type="term" value="P:rRNA processing"/>
    <property type="evidence" value="ECO:0007669"/>
    <property type="project" value="UniProtKB-UniRule"/>
</dbReference>
<dbReference type="Gene3D" id="2.20.28.40">
    <property type="entry name" value="H/ACA ribonucleoprotein complex, subunit Nop10"/>
    <property type="match status" value="1"/>
</dbReference>
<dbReference type="HAMAP" id="MF_00803">
    <property type="entry name" value="Nop10"/>
    <property type="match status" value="1"/>
</dbReference>
<dbReference type="InterPro" id="IPR007264">
    <property type="entry name" value="H/ACA_rnp_Nop10"/>
</dbReference>
<dbReference type="InterPro" id="IPR036756">
    <property type="entry name" value="H/ACA_rnp_Nop10_sf"/>
</dbReference>
<dbReference type="InterPro" id="IPR023532">
    <property type="entry name" value="Nop10_arc-typ"/>
</dbReference>
<dbReference type="NCBIfam" id="NF009623">
    <property type="entry name" value="PRK13130.1"/>
    <property type="match status" value="1"/>
</dbReference>
<dbReference type="Pfam" id="PF04135">
    <property type="entry name" value="Nop10p"/>
    <property type="match status" value="1"/>
</dbReference>
<dbReference type="SUPFAM" id="SSF144210">
    <property type="entry name" value="Nop10-like SnoRNP"/>
    <property type="match status" value="1"/>
</dbReference>
<sequence length="51" mass="6005">MKMKKCPKCGRYTLKDFCSECNEKSVTVKPPRFSPVDKYGKYRRALKKAKM</sequence>
<evidence type="ECO:0000255" key="1">
    <source>
        <dbReference type="HAMAP-Rule" id="MF_00803"/>
    </source>
</evidence>
<gene>
    <name evidence="1" type="primary">nop10</name>
    <name type="ordered locus">MmarC5_1700</name>
</gene>
<accession>A4G0L3</accession>